<evidence type="ECO:0000255" key="1">
    <source>
        <dbReference type="HAMAP-Rule" id="MF_00022"/>
    </source>
</evidence>
<evidence type="ECO:0000305" key="2"/>
<reference key="1">
    <citation type="submission" date="2008-06" db="EMBL/GenBank/DDBJ databases">
        <title>Complete sequence of Chlorobaculum parvum NCIB 8327.</title>
        <authorList>
            <consortium name="US DOE Joint Genome Institute"/>
            <person name="Lucas S."/>
            <person name="Copeland A."/>
            <person name="Lapidus A."/>
            <person name="Glavina del Rio T."/>
            <person name="Dalin E."/>
            <person name="Tice H."/>
            <person name="Bruce D."/>
            <person name="Goodwin L."/>
            <person name="Pitluck S."/>
            <person name="Schmutz J."/>
            <person name="Larimer F."/>
            <person name="Land M."/>
            <person name="Hauser L."/>
            <person name="Kyrpides N."/>
            <person name="Mikhailova N."/>
            <person name="Zhao F."/>
            <person name="Li T."/>
            <person name="Liu Z."/>
            <person name="Overmann J."/>
            <person name="Bryant D.A."/>
            <person name="Richardson P."/>
        </authorList>
    </citation>
    <scope>NUCLEOTIDE SEQUENCE [LARGE SCALE GENOMIC DNA]</scope>
    <source>
        <strain>DSM 263 / NCIMB 8327</strain>
    </source>
</reference>
<proteinExistence type="inferred from homology"/>
<accession>B3QQC6</accession>
<feature type="chain" id="PRO_0000367645" description="Glutamate--tRNA ligase">
    <location>
        <begin position="1"/>
        <end position="503"/>
    </location>
</feature>
<feature type="short sequence motif" description="'HIGH' region" evidence="1">
    <location>
        <begin position="12"/>
        <end position="22"/>
    </location>
</feature>
<feature type="short sequence motif" description="'KMSKS' region" evidence="1">
    <location>
        <begin position="259"/>
        <end position="263"/>
    </location>
</feature>
<feature type="binding site" evidence="1">
    <location>
        <position position="262"/>
    </location>
    <ligand>
        <name>ATP</name>
        <dbReference type="ChEBI" id="CHEBI:30616"/>
    </ligand>
</feature>
<name>SYE_CHLP8</name>
<comment type="function">
    <text evidence="1">Catalyzes the attachment of glutamate to tRNA(Glu) in a two-step reaction: glutamate is first activated by ATP to form Glu-AMP and then transferred to the acceptor end of tRNA(Glu).</text>
</comment>
<comment type="catalytic activity">
    <reaction evidence="1">
        <text>tRNA(Glu) + L-glutamate + ATP = L-glutamyl-tRNA(Glu) + AMP + diphosphate</text>
        <dbReference type="Rhea" id="RHEA:23540"/>
        <dbReference type="Rhea" id="RHEA-COMP:9663"/>
        <dbReference type="Rhea" id="RHEA-COMP:9680"/>
        <dbReference type="ChEBI" id="CHEBI:29985"/>
        <dbReference type="ChEBI" id="CHEBI:30616"/>
        <dbReference type="ChEBI" id="CHEBI:33019"/>
        <dbReference type="ChEBI" id="CHEBI:78442"/>
        <dbReference type="ChEBI" id="CHEBI:78520"/>
        <dbReference type="ChEBI" id="CHEBI:456215"/>
        <dbReference type="EC" id="6.1.1.17"/>
    </reaction>
</comment>
<comment type="subunit">
    <text evidence="1">Monomer.</text>
</comment>
<comment type="subcellular location">
    <subcellularLocation>
        <location evidence="1">Cytoplasm</location>
    </subcellularLocation>
</comment>
<comment type="similarity">
    <text evidence="1">Belongs to the class-I aminoacyl-tRNA synthetase family. Glutamate--tRNA ligase type 1 subfamily.</text>
</comment>
<comment type="sequence caution" evidence="2">
    <conflict type="erroneous initiation">
        <sequence resource="EMBL-CDS" id="ACF12129"/>
    </conflict>
</comment>
<protein>
    <recommendedName>
        <fullName evidence="1">Glutamate--tRNA ligase</fullName>
        <ecNumber evidence="1">6.1.1.17</ecNumber>
    </recommendedName>
    <alternativeName>
        <fullName evidence="1">Glutamyl-tRNA synthetase</fullName>
        <shortName evidence="1">GluRS</shortName>
    </alternativeName>
</protein>
<sequence length="503" mass="57813">MAGQRVRTRFAPSPTGYLHVGGLRTALYNYLFAKRMNGEFVIRIEDTDQSRKVEDAEKNLISTLEWAGIIADESPMHGGNYGPYVQSQRLDIYKKYCQQLLDDKNAYYCFSTSEELEENRQLQLKQGLQPKYNRKWLPEDMGGSMPQSEIKKKLDEGVPYVVRMKVPDYVSVWFEDVIRGPIEFDSATIDDQVLMKSDGFPTYHFASVIDDHLMEFTHIIRGEEWLPSMPKHLLLYEFFGWEPPKFAHLPLLLNPDRSKLSKRQGDVAVEDYVRKGYSSEAIVNFVALLGWNEGEGSEQEVFSMDELIEKFSLERVGKAGAVFNVDKLSWLEKQYIKTRPVDVIVEGIKPVLNEALAQRSPEMSVEWITSDDYLAKVVDLMRERVNFEHEFVTFSSYFFFEPESYEEDAVAKRWRPDMPELLGEFSKLLEANDDFTAENIEAELKAFVAPKGLKPAVIIHPLRLVVSGVSFGPSLYHMLEVLGKETVLRRIARGIERISIPEA</sequence>
<keyword id="KW-0030">Aminoacyl-tRNA synthetase</keyword>
<keyword id="KW-0067">ATP-binding</keyword>
<keyword id="KW-0963">Cytoplasm</keyword>
<keyword id="KW-0436">Ligase</keyword>
<keyword id="KW-0547">Nucleotide-binding</keyword>
<keyword id="KW-0648">Protein biosynthesis</keyword>
<dbReference type="EC" id="6.1.1.17" evidence="1"/>
<dbReference type="EMBL" id="CP001099">
    <property type="protein sequence ID" value="ACF12129.1"/>
    <property type="status" value="ALT_INIT"/>
    <property type="molecule type" value="Genomic_DNA"/>
</dbReference>
<dbReference type="RefSeq" id="WP_041466348.1">
    <property type="nucleotide sequence ID" value="NC_011027.1"/>
</dbReference>
<dbReference type="SMR" id="B3QQC6"/>
<dbReference type="STRING" id="517417.Cpar_1737"/>
<dbReference type="KEGG" id="cpc:Cpar_1737"/>
<dbReference type="eggNOG" id="COG0008">
    <property type="taxonomic scope" value="Bacteria"/>
</dbReference>
<dbReference type="HOGENOM" id="CLU_015768_6_3_10"/>
<dbReference type="OrthoDB" id="9807503at2"/>
<dbReference type="Proteomes" id="UP000008811">
    <property type="component" value="Chromosome"/>
</dbReference>
<dbReference type="GO" id="GO:0005737">
    <property type="term" value="C:cytoplasm"/>
    <property type="evidence" value="ECO:0007669"/>
    <property type="project" value="UniProtKB-SubCell"/>
</dbReference>
<dbReference type="GO" id="GO:0005524">
    <property type="term" value="F:ATP binding"/>
    <property type="evidence" value="ECO:0007669"/>
    <property type="project" value="UniProtKB-UniRule"/>
</dbReference>
<dbReference type="GO" id="GO:0004818">
    <property type="term" value="F:glutamate-tRNA ligase activity"/>
    <property type="evidence" value="ECO:0007669"/>
    <property type="project" value="UniProtKB-UniRule"/>
</dbReference>
<dbReference type="GO" id="GO:0000049">
    <property type="term" value="F:tRNA binding"/>
    <property type="evidence" value="ECO:0007669"/>
    <property type="project" value="InterPro"/>
</dbReference>
<dbReference type="GO" id="GO:0008270">
    <property type="term" value="F:zinc ion binding"/>
    <property type="evidence" value="ECO:0007669"/>
    <property type="project" value="InterPro"/>
</dbReference>
<dbReference type="GO" id="GO:0006424">
    <property type="term" value="P:glutamyl-tRNA aminoacylation"/>
    <property type="evidence" value="ECO:0007669"/>
    <property type="project" value="UniProtKB-UniRule"/>
</dbReference>
<dbReference type="CDD" id="cd00808">
    <property type="entry name" value="GluRS_core"/>
    <property type="match status" value="1"/>
</dbReference>
<dbReference type="FunFam" id="3.40.50.620:FF:000045">
    <property type="entry name" value="Glutamate--tRNA ligase, mitochondrial"/>
    <property type="match status" value="1"/>
</dbReference>
<dbReference type="Gene3D" id="1.10.10.350">
    <property type="match status" value="1"/>
</dbReference>
<dbReference type="Gene3D" id="3.40.50.620">
    <property type="entry name" value="HUPs"/>
    <property type="match status" value="1"/>
</dbReference>
<dbReference type="HAMAP" id="MF_00022">
    <property type="entry name" value="Glu_tRNA_synth_type1"/>
    <property type="match status" value="1"/>
</dbReference>
<dbReference type="InterPro" id="IPR045462">
    <property type="entry name" value="aa-tRNA-synth_I_cd-bd"/>
</dbReference>
<dbReference type="InterPro" id="IPR020751">
    <property type="entry name" value="aa-tRNA-synth_I_codon-bd_sub2"/>
</dbReference>
<dbReference type="InterPro" id="IPR001412">
    <property type="entry name" value="aa-tRNA-synth_I_CS"/>
</dbReference>
<dbReference type="InterPro" id="IPR008925">
    <property type="entry name" value="aa_tRNA-synth_I_cd-bd_sf"/>
</dbReference>
<dbReference type="InterPro" id="IPR004527">
    <property type="entry name" value="Glu-tRNA-ligase_bac/mito"/>
</dbReference>
<dbReference type="InterPro" id="IPR000924">
    <property type="entry name" value="Glu/Gln-tRNA-synth"/>
</dbReference>
<dbReference type="InterPro" id="IPR020058">
    <property type="entry name" value="Glu/Gln-tRNA-synth_Ib_cat-dom"/>
</dbReference>
<dbReference type="InterPro" id="IPR049940">
    <property type="entry name" value="GluQ/Sye"/>
</dbReference>
<dbReference type="InterPro" id="IPR033910">
    <property type="entry name" value="GluRS_core"/>
</dbReference>
<dbReference type="InterPro" id="IPR014729">
    <property type="entry name" value="Rossmann-like_a/b/a_fold"/>
</dbReference>
<dbReference type="NCBIfam" id="TIGR00464">
    <property type="entry name" value="gltX_bact"/>
    <property type="match status" value="1"/>
</dbReference>
<dbReference type="PANTHER" id="PTHR43311">
    <property type="entry name" value="GLUTAMATE--TRNA LIGASE"/>
    <property type="match status" value="1"/>
</dbReference>
<dbReference type="PANTHER" id="PTHR43311:SF2">
    <property type="entry name" value="GLUTAMATE--TRNA LIGASE, MITOCHONDRIAL-RELATED"/>
    <property type="match status" value="1"/>
</dbReference>
<dbReference type="Pfam" id="PF19269">
    <property type="entry name" value="Anticodon_2"/>
    <property type="match status" value="1"/>
</dbReference>
<dbReference type="Pfam" id="PF00749">
    <property type="entry name" value="tRNA-synt_1c"/>
    <property type="match status" value="1"/>
</dbReference>
<dbReference type="PRINTS" id="PR00987">
    <property type="entry name" value="TRNASYNTHGLU"/>
</dbReference>
<dbReference type="SUPFAM" id="SSF48163">
    <property type="entry name" value="An anticodon-binding domain of class I aminoacyl-tRNA synthetases"/>
    <property type="match status" value="1"/>
</dbReference>
<dbReference type="SUPFAM" id="SSF52374">
    <property type="entry name" value="Nucleotidylyl transferase"/>
    <property type="match status" value="1"/>
</dbReference>
<dbReference type="PROSITE" id="PS00178">
    <property type="entry name" value="AA_TRNA_LIGASE_I"/>
    <property type="match status" value="1"/>
</dbReference>
<gene>
    <name evidence="1" type="primary">gltX</name>
    <name type="ordered locus">Cpar_1737</name>
</gene>
<organism>
    <name type="scientific">Chlorobaculum parvum (strain DSM 263 / NCIMB 8327)</name>
    <name type="common">Chlorobium vibrioforme subsp. thiosulfatophilum</name>
    <dbReference type="NCBI Taxonomy" id="517417"/>
    <lineage>
        <taxon>Bacteria</taxon>
        <taxon>Pseudomonadati</taxon>
        <taxon>Chlorobiota</taxon>
        <taxon>Chlorobiia</taxon>
        <taxon>Chlorobiales</taxon>
        <taxon>Chlorobiaceae</taxon>
        <taxon>Chlorobaculum</taxon>
    </lineage>
</organism>